<proteinExistence type="inferred from homology"/>
<organism>
    <name type="scientific">Flavobacterium psychrophilum (strain ATCC 49511 / DSM 21280 / CIP 103535 / JIP02/86)</name>
    <dbReference type="NCBI Taxonomy" id="402612"/>
    <lineage>
        <taxon>Bacteria</taxon>
        <taxon>Pseudomonadati</taxon>
        <taxon>Bacteroidota</taxon>
        <taxon>Flavobacteriia</taxon>
        <taxon>Flavobacteriales</taxon>
        <taxon>Flavobacteriaceae</taxon>
        <taxon>Flavobacterium</taxon>
    </lineage>
</organism>
<accession>A6GZ82</accession>
<sequence>MYHKYKNVELVKPSGLELKDRLVSVNRVTKVTKGGRAFGFSAIVVVGDENGVVGHGLGKSKDVSEAIAKAVEDAKKNLVKIPLSGKSVPHEQKGKFGGARVNLMPASHGTGVIAGGAVRSVLESVGIHDVLSKSQGSSNPHNVVKATFDALLQMRSAYTVSRQRGISLEKVFKG</sequence>
<evidence type="ECO:0000255" key="1">
    <source>
        <dbReference type="HAMAP-Rule" id="MF_01307"/>
    </source>
</evidence>
<evidence type="ECO:0000305" key="2"/>
<name>RS5_FLAPJ</name>
<comment type="function">
    <text evidence="1">With S4 and S12 plays an important role in translational accuracy.</text>
</comment>
<comment type="function">
    <text evidence="1">Located at the back of the 30S subunit body where it stabilizes the conformation of the head with respect to the body.</text>
</comment>
<comment type="subunit">
    <text evidence="1">Part of the 30S ribosomal subunit. Contacts proteins S4 and S8.</text>
</comment>
<comment type="domain">
    <text>The N-terminal domain interacts with the head of the 30S subunit; the C-terminal domain interacts with the body and contacts protein S4. The interaction surface between S4 and S5 is involved in control of translational fidelity.</text>
</comment>
<comment type="similarity">
    <text evidence="1">Belongs to the universal ribosomal protein uS5 family.</text>
</comment>
<keyword id="KW-1185">Reference proteome</keyword>
<keyword id="KW-0687">Ribonucleoprotein</keyword>
<keyword id="KW-0689">Ribosomal protein</keyword>
<keyword id="KW-0694">RNA-binding</keyword>
<keyword id="KW-0699">rRNA-binding</keyword>
<reference key="1">
    <citation type="journal article" date="2007" name="Nat. Biotechnol.">
        <title>Complete genome sequence of the fish pathogen Flavobacterium psychrophilum.</title>
        <authorList>
            <person name="Duchaud E."/>
            <person name="Boussaha M."/>
            <person name="Loux V."/>
            <person name="Bernardet J.-F."/>
            <person name="Michel C."/>
            <person name="Kerouault B."/>
            <person name="Mondot S."/>
            <person name="Nicolas P."/>
            <person name="Bossy R."/>
            <person name="Caron C."/>
            <person name="Bessieres P."/>
            <person name="Gibrat J.-F."/>
            <person name="Claverol S."/>
            <person name="Dumetz F."/>
            <person name="Le Henaff M."/>
            <person name="Benmansour A."/>
        </authorList>
    </citation>
    <scope>NUCLEOTIDE SEQUENCE [LARGE SCALE GENOMIC DNA]</scope>
    <source>
        <strain>ATCC 49511 / DSM 21280 / CIP 103535 / JIP02/86</strain>
    </source>
</reference>
<feature type="chain" id="PRO_0000323123" description="Small ribosomal subunit protein uS5">
    <location>
        <begin position="1"/>
        <end position="174"/>
    </location>
</feature>
<feature type="domain" description="S5 DRBM" evidence="1">
    <location>
        <begin position="18"/>
        <end position="81"/>
    </location>
</feature>
<protein>
    <recommendedName>
        <fullName evidence="1">Small ribosomal subunit protein uS5</fullName>
    </recommendedName>
    <alternativeName>
        <fullName evidence="2">30S ribosomal protein S5</fullName>
    </alternativeName>
</protein>
<dbReference type="EMBL" id="AM398681">
    <property type="protein sequence ID" value="CAL43405.1"/>
    <property type="molecule type" value="Genomic_DNA"/>
</dbReference>
<dbReference type="RefSeq" id="WP_011963453.1">
    <property type="nucleotide sequence ID" value="NC_009613.3"/>
</dbReference>
<dbReference type="RefSeq" id="YP_001296216.1">
    <property type="nucleotide sequence ID" value="NC_009613.3"/>
</dbReference>
<dbReference type="SMR" id="A6GZ82"/>
<dbReference type="STRING" id="402612.FP1322"/>
<dbReference type="EnsemblBacteria" id="CAL43405">
    <property type="protein sequence ID" value="CAL43405"/>
    <property type="gene ID" value="FP1322"/>
</dbReference>
<dbReference type="GeneID" id="66553225"/>
<dbReference type="KEGG" id="fps:FP1322"/>
<dbReference type="PATRIC" id="fig|402612.5.peg.1339"/>
<dbReference type="eggNOG" id="COG0098">
    <property type="taxonomic scope" value="Bacteria"/>
</dbReference>
<dbReference type="HOGENOM" id="CLU_065898_2_2_10"/>
<dbReference type="OrthoDB" id="9809045at2"/>
<dbReference type="Proteomes" id="UP000006394">
    <property type="component" value="Chromosome"/>
</dbReference>
<dbReference type="GO" id="GO:0015935">
    <property type="term" value="C:small ribosomal subunit"/>
    <property type="evidence" value="ECO:0007669"/>
    <property type="project" value="InterPro"/>
</dbReference>
<dbReference type="GO" id="GO:0019843">
    <property type="term" value="F:rRNA binding"/>
    <property type="evidence" value="ECO:0007669"/>
    <property type="project" value="UniProtKB-UniRule"/>
</dbReference>
<dbReference type="GO" id="GO:0003735">
    <property type="term" value="F:structural constituent of ribosome"/>
    <property type="evidence" value="ECO:0007669"/>
    <property type="project" value="InterPro"/>
</dbReference>
<dbReference type="GO" id="GO:0006412">
    <property type="term" value="P:translation"/>
    <property type="evidence" value="ECO:0007669"/>
    <property type="project" value="UniProtKB-UniRule"/>
</dbReference>
<dbReference type="FunFam" id="3.30.160.20:FF:000001">
    <property type="entry name" value="30S ribosomal protein S5"/>
    <property type="match status" value="1"/>
</dbReference>
<dbReference type="FunFam" id="3.30.230.10:FF:000002">
    <property type="entry name" value="30S ribosomal protein S5"/>
    <property type="match status" value="1"/>
</dbReference>
<dbReference type="Gene3D" id="3.30.160.20">
    <property type="match status" value="1"/>
</dbReference>
<dbReference type="Gene3D" id="3.30.230.10">
    <property type="match status" value="1"/>
</dbReference>
<dbReference type="HAMAP" id="MF_01307_B">
    <property type="entry name" value="Ribosomal_uS5_B"/>
    <property type="match status" value="1"/>
</dbReference>
<dbReference type="InterPro" id="IPR020568">
    <property type="entry name" value="Ribosomal_Su5_D2-typ_SF"/>
</dbReference>
<dbReference type="InterPro" id="IPR000851">
    <property type="entry name" value="Ribosomal_uS5"/>
</dbReference>
<dbReference type="InterPro" id="IPR005712">
    <property type="entry name" value="Ribosomal_uS5_bac-type"/>
</dbReference>
<dbReference type="InterPro" id="IPR005324">
    <property type="entry name" value="Ribosomal_uS5_C"/>
</dbReference>
<dbReference type="InterPro" id="IPR013810">
    <property type="entry name" value="Ribosomal_uS5_N"/>
</dbReference>
<dbReference type="InterPro" id="IPR018192">
    <property type="entry name" value="Ribosomal_uS5_N_CS"/>
</dbReference>
<dbReference type="InterPro" id="IPR014721">
    <property type="entry name" value="Ribsml_uS5_D2-typ_fold_subgr"/>
</dbReference>
<dbReference type="NCBIfam" id="TIGR01021">
    <property type="entry name" value="rpsE_bact"/>
    <property type="match status" value="1"/>
</dbReference>
<dbReference type="PANTHER" id="PTHR48277">
    <property type="entry name" value="MITOCHONDRIAL RIBOSOMAL PROTEIN S5"/>
    <property type="match status" value="1"/>
</dbReference>
<dbReference type="PANTHER" id="PTHR48277:SF1">
    <property type="entry name" value="MITOCHONDRIAL RIBOSOMAL PROTEIN S5"/>
    <property type="match status" value="1"/>
</dbReference>
<dbReference type="Pfam" id="PF00333">
    <property type="entry name" value="Ribosomal_S5"/>
    <property type="match status" value="1"/>
</dbReference>
<dbReference type="Pfam" id="PF03719">
    <property type="entry name" value="Ribosomal_S5_C"/>
    <property type="match status" value="1"/>
</dbReference>
<dbReference type="SUPFAM" id="SSF54768">
    <property type="entry name" value="dsRNA-binding domain-like"/>
    <property type="match status" value="1"/>
</dbReference>
<dbReference type="SUPFAM" id="SSF54211">
    <property type="entry name" value="Ribosomal protein S5 domain 2-like"/>
    <property type="match status" value="1"/>
</dbReference>
<dbReference type="PROSITE" id="PS00585">
    <property type="entry name" value="RIBOSOMAL_S5"/>
    <property type="match status" value="1"/>
</dbReference>
<dbReference type="PROSITE" id="PS50881">
    <property type="entry name" value="S5_DSRBD"/>
    <property type="match status" value="1"/>
</dbReference>
<gene>
    <name evidence="1" type="primary">rpsE</name>
    <name type="ordered locus">FP1322</name>
</gene>